<dbReference type="EC" id="3.1.2.6" evidence="1"/>
<dbReference type="EMBL" id="CP000285">
    <property type="protein sequence ID" value="ABE59296.1"/>
    <property type="molecule type" value="Genomic_DNA"/>
</dbReference>
<dbReference type="RefSeq" id="WP_011507242.1">
    <property type="nucleotide sequence ID" value="NC_007963.1"/>
</dbReference>
<dbReference type="SMR" id="Q1QW62"/>
<dbReference type="STRING" id="290398.Csal_1944"/>
<dbReference type="GeneID" id="95334662"/>
<dbReference type="KEGG" id="csa:Csal_1944"/>
<dbReference type="eggNOG" id="COG0491">
    <property type="taxonomic scope" value="Bacteria"/>
</dbReference>
<dbReference type="HOGENOM" id="CLU_030571_4_1_6"/>
<dbReference type="OrthoDB" id="9802248at2"/>
<dbReference type="UniPathway" id="UPA00619">
    <property type="reaction ID" value="UER00676"/>
</dbReference>
<dbReference type="Proteomes" id="UP000000239">
    <property type="component" value="Chromosome"/>
</dbReference>
<dbReference type="GO" id="GO:0004416">
    <property type="term" value="F:hydroxyacylglutathione hydrolase activity"/>
    <property type="evidence" value="ECO:0007669"/>
    <property type="project" value="UniProtKB-UniRule"/>
</dbReference>
<dbReference type="GO" id="GO:0046872">
    <property type="term" value="F:metal ion binding"/>
    <property type="evidence" value="ECO:0007669"/>
    <property type="project" value="UniProtKB-KW"/>
</dbReference>
<dbReference type="GO" id="GO:0019243">
    <property type="term" value="P:methylglyoxal catabolic process to D-lactate via S-lactoyl-glutathione"/>
    <property type="evidence" value="ECO:0007669"/>
    <property type="project" value="InterPro"/>
</dbReference>
<dbReference type="CDD" id="cd07723">
    <property type="entry name" value="hydroxyacylglutathione_hydrolase_MBL-fold"/>
    <property type="match status" value="1"/>
</dbReference>
<dbReference type="Gene3D" id="3.60.15.10">
    <property type="entry name" value="Ribonuclease Z/Hydroxyacylglutathione hydrolase-like"/>
    <property type="match status" value="1"/>
</dbReference>
<dbReference type="HAMAP" id="MF_01374">
    <property type="entry name" value="Glyoxalase_2"/>
    <property type="match status" value="1"/>
</dbReference>
<dbReference type="InterPro" id="IPR035680">
    <property type="entry name" value="Clx_II_MBL"/>
</dbReference>
<dbReference type="InterPro" id="IPR050110">
    <property type="entry name" value="Glyoxalase_II_hydrolase"/>
</dbReference>
<dbReference type="InterPro" id="IPR032282">
    <property type="entry name" value="HAGH_C"/>
</dbReference>
<dbReference type="InterPro" id="IPR017782">
    <property type="entry name" value="Hydroxyacylglutathione_Hdrlase"/>
</dbReference>
<dbReference type="InterPro" id="IPR001279">
    <property type="entry name" value="Metallo-B-lactamas"/>
</dbReference>
<dbReference type="InterPro" id="IPR036866">
    <property type="entry name" value="RibonucZ/Hydroxyglut_hydro"/>
</dbReference>
<dbReference type="NCBIfam" id="TIGR03413">
    <property type="entry name" value="GSH_gloB"/>
    <property type="match status" value="1"/>
</dbReference>
<dbReference type="PANTHER" id="PTHR43705">
    <property type="entry name" value="HYDROXYACYLGLUTATHIONE HYDROLASE"/>
    <property type="match status" value="1"/>
</dbReference>
<dbReference type="PANTHER" id="PTHR43705:SF1">
    <property type="entry name" value="HYDROXYACYLGLUTATHIONE HYDROLASE GLOB"/>
    <property type="match status" value="1"/>
</dbReference>
<dbReference type="Pfam" id="PF16123">
    <property type="entry name" value="HAGH_C"/>
    <property type="match status" value="1"/>
</dbReference>
<dbReference type="Pfam" id="PF00753">
    <property type="entry name" value="Lactamase_B"/>
    <property type="match status" value="1"/>
</dbReference>
<dbReference type="PIRSF" id="PIRSF005457">
    <property type="entry name" value="Glx"/>
    <property type="match status" value="1"/>
</dbReference>
<dbReference type="SMART" id="SM00849">
    <property type="entry name" value="Lactamase_B"/>
    <property type="match status" value="1"/>
</dbReference>
<dbReference type="SUPFAM" id="SSF56281">
    <property type="entry name" value="Metallo-hydrolase/oxidoreductase"/>
    <property type="match status" value="1"/>
</dbReference>
<sequence>MLTVIPIPAFQDNYIWLLRQDASDKVVIVDPGDAQPVIEYLEREGLSLAAILVTHHHHDHTGGIDALVKRYSPRVIGPDNSAIPAIDEVVGDEDECRVQGRRFEVFAVPGHTLDHIAFYAPGTPGLLFCGDTLFSGGCGRLFEGTAEQMHRSLARLAALPDDTLVFAGHEYTLANLRFAQAAEPDNPARDAHLGECERARQLERPTLPSTIGRERQINPFLRIDQPGLLNALAEQGSVDDDSAAFATLRGWKDRF</sequence>
<proteinExistence type="inferred from homology"/>
<keyword id="KW-0378">Hydrolase</keyword>
<keyword id="KW-0479">Metal-binding</keyword>
<keyword id="KW-1185">Reference proteome</keyword>
<keyword id="KW-0862">Zinc</keyword>
<feature type="chain" id="PRO_1000144753" description="Hydroxyacylglutathione hydrolase">
    <location>
        <begin position="1"/>
        <end position="255"/>
    </location>
</feature>
<feature type="binding site" evidence="1">
    <location>
        <position position="55"/>
    </location>
    <ligand>
        <name>Zn(2+)</name>
        <dbReference type="ChEBI" id="CHEBI:29105"/>
        <label>1</label>
    </ligand>
</feature>
<feature type="binding site" evidence="1">
    <location>
        <position position="57"/>
    </location>
    <ligand>
        <name>Zn(2+)</name>
        <dbReference type="ChEBI" id="CHEBI:29105"/>
        <label>1</label>
    </ligand>
</feature>
<feature type="binding site" evidence="1">
    <location>
        <position position="59"/>
    </location>
    <ligand>
        <name>Zn(2+)</name>
        <dbReference type="ChEBI" id="CHEBI:29105"/>
        <label>2</label>
    </ligand>
</feature>
<feature type="binding site" evidence="1">
    <location>
        <position position="60"/>
    </location>
    <ligand>
        <name>Zn(2+)</name>
        <dbReference type="ChEBI" id="CHEBI:29105"/>
        <label>2</label>
    </ligand>
</feature>
<feature type="binding site" evidence="1">
    <location>
        <position position="111"/>
    </location>
    <ligand>
        <name>Zn(2+)</name>
        <dbReference type="ChEBI" id="CHEBI:29105"/>
        <label>1</label>
    </ligand>
</feature>
<feature type="binding site" evidence="1">
    <location>
        <position position="131"/>
    </location>
    <ligand>
        <name>Zn(2+)</name>
        <dbReference type="ChEBI" id="CHEBI:29105"/>
        <label>1</label>
    </ligand>
</feature>
<feature type="binding site" evidence="1">
    <location>
        <position position="131"/>
    </location>
    <ligand>
        <name>Zn(2+)</name>
        <dbReference type="ChEBI" id="CHEBI:29105"/>
        <label>2</label>
    </ligand>
</feature>
<feature type="binding site" evidence="1">
    <location>
        <position position="169"/>
    </location>
    <ligand>
        <name>Zn(2+)</name>
        <dbReference type="ChEBI" id="CHEBI:29105"/>
        <label>2</label>
    </ligand>
</feature>
<organism>
    <name type="scientific">Chromohalobacter salexigens (strain ATCC BAA-138 / DSM 3043 / CIP 106854 / NCIMB 13768 / 1H11)</name>
    <dbReference type="NCBI Taxonomy" id="290398"/>
    <lineage>
        <taxon>Bacteria</taxon>
        <taxon>Pseudomonadati</taxon>
        <taxon>Pseudomonadota</taxon>
        <taxon>Gammaproteobacteria</taxon>
        <taxon>Oceanospirillales</taxon>
        <taxon>Halomonadaceae</taxon>
        <taxon>Chromohalobacter</taxon>
    </lineage>
</organism>
<evidence type="ECO:0000255" key="1">
    <source>
        <dbReference type="HAMAP-Rule" id="MF_01374"/>
    </source>
</evidence>
<accession>Q1QW62</accession>
<gene>
    <name evidence="1" type="primary">gloB</name>
    <name type="ordered locus">Csal_1944</name>
</gene>
<protein>
    <recommendedName>
        <fullName evidence="1">Hydroxyacylglutathione hydrolase</fullName>
        <ecNumber evidence="1">3.1.2.6</ecNumber>
    </recommendedName>
    <alternativeName>
        <fullName evidence="1">Glyoxalase II</fullName>
        <shortName evidence="1">Glx II</shortName>
    </alternativeName>
</protein>
<name>GLO2_CHRSD</name>
<reference key="1">
    <citation type="journal article" date="2011" name="Stand. Genomic Sci.">
        <title>Complete genome sequence of the halophilic and highly halotolerant Chromohalobacter salexigens type strain (1H11(T)).</title>
        <authorList>
            <person name="Copeland A."/>
            <person name="O'Connor K."/>
            <person name="Lucas S."/>
            <person name="Lapidus A."/>
            <person name="Berry K.W."/>
            <person name="Detter J.C."/>
            <person name="Del Rio T.G."/>
            <person name="Hammon N."/>
            <person name="Dalin E."/>
            <person name="Tice H."/>
            <person name="Pitluck S."/>
            <person name="Bruce D."/>
            <person name="Goodwin L."/>
            <person name="Han C."/>
            <person name="Tapia R."/>
            <person name="Saunders E."/>
            <person name="Schmutz J."/>
            <person name="Brettin T."/>
            <person name="Larimer F."/>
            <person name="Land M."/>
            <person name="Hauser L."/>
            <person name="Vargas C."/>
            <person name="Nieto J.J."/>
            <person name="Kyrpides N.C."/>
            <person name="Ivanova N."/>
            <person name="Goker M."/>
            <person name="Klenk H.P."/>
            <person name="Csonka L.N."/>
            <person name="Woyke T."/>
        </authorList>
    </citation>
    <scope>NUCLEOTIDE SEQUENCE [LARGE SCALE GENOMIC DNA]</scope>
    <source>
        <strain>ATCC BAA-138 / DSM 3043 / CIP 106854 / NCIMB 13768 / 1H11</strain>
    </source>
</reference>
<comment type="function">
    <text evidence="1">Thiolesterase that catalyzes the hydrolysis of S-D-lactoyl-glutathione to form glutathione and D-lactic acid.</text>
</comment>
<comment type="catalytic activity">
    <reaction evidence="1">
        <text>an S-(2-hydroxyacyl)glutathione + H2O = a 2-hydroxy carboxylate + glutathione + H(+)</text>
        <dbReference type="Rhea" id="RHEA:21864"/>
        <dbReference type="ChEBI" id="CHEBI:15377"/>
        <dbReference type="ChEBI" id="CHEBI:15378"/>
        <dbReference type="ChEBI" id="CHEBI:57925"/>
        <dbReference type="ChEBI" id="CHEBI:58896"/>
        <dbReference type="ChEBI" id="CHEBI:71261"/>
        <dbReference type="EC" id="3.1.2.6"/>
    </reaction>
</comment>
<comment type="cofactor">
    <cofactor evidence="1">
        <name>Zn(2+)</name>
        <dbReference type="ChEBI" id="CHEBI:29105"/>
    </cofactor>
    <text evidence="1">Binds 2 Zn(2+) ions per subunit.</text>
</comment>
<comment type="pathway">
    <text evidence="1">Secondary metabolite metabolism; methylglyoxal degradation; (R)-lactate from methylglyoxal: step 2/2.</text>
</comment>
<comment type="subunit">
    <text evidence="1">Monomer.</text>
</comment>
<comment type="similarity">
    <text evidence="1">Belongs to the metallo-beta-lactamase superfamily. Glyoxalase II family.</text>
</comment>